<comment type="function">
    <text evidence="1 2 3 4 5">Acts in a cell autonomous fashion to specify the properties of the sensory ray and non-autonomously in the choice of hypodermal versus neuroblast cell fate.</text>
</comment>
<comment type="developmental stage">
    <text evidence="3">Expressed from the onset of gastrulation, beginning with the dorsal hyp7 cells. Subsequently detected in other cell types including hypodermal cells, neuronal cells near the pharyngeal bulbs, neurons along the ventral nerve cord, the AVM, HOA, HOB, PLM and VA3 neurons, some body wall muscles, and the ray cells. During the L4 stage, expressed within neuron A of all ray cells, neuron B of rays 3 and 6, and the structural cell of ray 6.</text>
</comment>
<comment type="induction">
    <text evidence="2">Transcription is repressed by heat shock.</text>
</comment>
<comment type="disruption phenotype">
    <text evidence="5">In the male tail, ray precursor cells show altered fates. Conical sensory ray 6 is absent as it appears to fuse with ray 4. Males show reduced body length and uncoordinated movement in a backwards locomotion. Hermaphrodites produce a reduced brood size due to a decreased number of laid eggs.</text>
</comment>
<comment type="similarity">
    <text evidence="6">Belongs to the mab-21 family.</text>
</comment>
<protein>
    <recommendedName>
        <fullName>Protein male abnormal 21</fullName>
    </recommendedName>
</protein>
<name>MAB21_CAEEL</name>
<dbReference type="EMBL" id="U19861">
    <property type="protein sequence ID" value="AAA97554.2"/>
    <property type="molecule type" value="mRNA"/>
</dbReference>
<dbReference type="EMBL" id="Z46242">
    <property type="protein sequence ID" value="CAA86330.2"/>
    <property type="molecule type" value="Genomic_DNA"/>
</dbReference>
<dbReference type="PIR" id="T21804">
    <property type="entry name" value="T21804"/>
</dbReference>
<dbReference type="RefSeq" id="NP_497940.2">
    <property type="nucleotide sequence ID" value="NM_065539.5"/>
</dbReference>
<dbReference type="SMR" id="Q20054"/>
<dbReference type="BioGRID" id="40843">
    <property type="interactions" value="2"/>
</dbReference>
<dbReference type="FunCoup" id="Q20054">
    <property type="interactions" value="299"/>
</dbReference>
<dbReference type="STRING" id="6239.F35G12.6.1"/>
<dbReference type="PaxDb" id="6239-F35G12.6"/>
<dbReference type="PeptideAtlas" id="Q20054"/>
<dbReference type="EnsemblMetazoa" id="F35G12.6.1">
    <property type="protein sequence ID" value="F35G12.6.1"/>
    <property type="gene ID" value="WBGene00003112"/>
</dbReference>
<dbReference type="GeneID" id="175607"/>
<dbReference type="KEGG" id="cel:CELE_F35G12.6"/>
<dbReference type="UCSC" id="F35G12.6">
    <property type="organism name" value="c. elegans"/>
</dbReference>
<dbReference type="AGR" id="WB:WBGene00003112"/>
<dbReference type="CTD" id="44127"/>
<dbReference type="WormBase" id="F35G12.6">
    <property type="protein sequence ID" value="CE32651"/>
    <property type="gene ID" value="WBGene00003112"/>
    <property type="gene designation" value="mab-21"/>
</dbReference>
<dbReference type="eggNOG" id="KOG3963">
    <property type="taxonomic scope" value="Eukaryota"/>
</dbReference>
<dbReference type="GeneTree" id="ENSGT01050000244827"/>
<dbReference type="HOGENOM" id="CLU_045315_0_0_1"/>
<dbReference type="InParanoid" id="Q20054"/>
<dbReference type="OMA" id="RESIYMK"/>
<dbReference type="OrthoDB" id="5961151at2759"/>
<dbReference type="PhylomeDB" id="Q20054"/>
<dbReference type="SignaLink" id="Q20054"/>
<dbReference type="PRO" id="PR:Q20054"/>
<dbReference type="Proteomes" id="UP000001940">
    <property type="component" value="Chromosome III"/>
</dbReference>
<dbReference type="Bgee" id="WBGene00003112">
    <property type="expression patterns" value="Expressed in larva and 3 other cell types or tissues"/>
</dbReference>
<dbReference type="GO" id="GO:0045165">
    <property type="term" value="P:cell fate commitment"/>
    <property type="evidence" value="ECO:0000315"/>
    <property type="project" value="WormBase"/>
</dbReference>
<dbReference type="GO" id="GO:0009792">
    <property type="term" value="P:embryo development ending in birth or egg hatching"/>
    <property type="evidence" value="ECO:0000315"/>
    <property type="project" value="WormBase"/>
</dbReference>
<dbReference type="GO" id="GO:0090597">
    <property type="term" value="P:nematode male tail mating organ morphogenesis"/>
    <property type="evidence" value="ECO:0000315"/>
    <property type="project" value="UniProtKB"/>
</dbReference>
<dbReference type="FunFam" id="1.10.1410.40:FF:000002">
    <property type="entry name" value="protein mab-21-like 1"/>
    <property type="match status" value="1"/>
</dbReference>
<dbReference type="Gene3D" id="1.10.1410.40">
    <property type="match status" value="1"/>
</dbReference>
<dbReference type="Gene3D" id="3.30.460.90">
    <property type="match status" value="1"/>
</dbReference>
<dbReference type="InterPro" id="IPR046903">
    <property type="entry name" value="Mab-21-like_nuc_Trfase"/>
</dbReference>
<dbReference type="InterPro" id="IPR046906">
    <property type="entry name" value="Mab-21_HhH/H2TH-like"/>
</dbReference>
<dbReference type="InterPro" id="IPR024810">
    <property type="entry name" value="MAB21L/cGLR"/>
</dbReference>
<dbReference type="PANTHER" id="PTHR10656">
    <property type="entry name" value="CELL FATE DETERMINING PROTEIN MAB21-RELATED"/>
    <property type="match status" value="1"/>
</dbReference>
<dbReference type="PANTHER" id="PTHR10656:SF70">
    <property type="entry name" value="PROTEIN MAB-21-RELATED"/>
    <property type="match status" value="1"/>
</dbReference>
<dbReference type="Pfam" id="PF03281">
    <property type="entry name" value="Mab-21"/>
    <property type="match status" value="1"/>
</dbReference>
<dbReference type="Pfam" id="PF20266">
    <property type="entry name" value="Mab-21_C"/>
    <property type="match status" value="1"/>
</dbReference>
<dbReference type="SMART" id="SM01265">
    <property type="entry name" value="Mab-21"/>
    <property type="match status" value="1"/>
</dbReference>
<proteinExistence type="evidence at transcript level"/>
<evidence type="ECO:0000269" key="1">
    <source>
    </source>
</evidence>
<evidence type="ECO:0000269" key="2">
    <source>
    </source>
</evidence>
<evidence type="ECO:0000269" key="3">
    <source>
    </source>
</evidence>
<evidence type="ECO:0000269" key="4">
    <source>
    </source>
</evidence>
<evidence type="ECO:0000269" key="5">
    <source>
    </source>
</evidence>
<evidence type="ECO:0000305" key="6"/>
<keyword id="KW-0217">Developmental protein</keyword>
<keyword id="KW-0221">Differentiation</keyword>
<keyword id="KW-1185">Reference proteome</keyword>
<organism>
    <name type="scientific">Caenorhabditis elegans</name>
    <dbReference type="NCBI Taxonomy" id="6239"/>
    <lineage>
        <taxon>Eukaryota</taxon>
        <taxon>Metazoa</taxon>
        <taxon>Ecdysozoa</taxon>
        <taxon>Nematoda</taxon>
        <taxon>Chromadorea</taxon>
        <taxon>Rhabditida</taxon>
        <taxon>Rhabditina</taxon>
        <taxon>Rhabditomorpha</taxon>
        <taxon>Rhabditoidea</taxon>
        <taxon>Rhabditidae</taxon>
        <taxon>Peloderinae</taxon>
        <taxon>Caenorhabditis</taxon>
    </lineage>
</organism>
<feature type="chain" id="PRO_0000312802" description="Protein male abnormal 21">
    <location>
        <begin position="1"/>
        <end position="364"/>
    </location>
</feature>
<accession>Q20054</accession>
<accession>Q17337</accession>
<sequence>MLGHNQNVVYQVNNYFNEKVQHRKVRVTKTVQRIAKVVQEILKEVEAQEPRFINTLSETTTGRFDGIVVHSPSEYEAVLYLNQMGVFNFVDDGTIQGCAVLKLSDGRKRSMSLWVEFITASGYLSARKIRHRFQNIVAQVLQTPQFSDYCKLLQDNTDVRVRVDDKYTVQITCAFRCNGIWPRSASHWPIAGLPWPNAALANQTKAEGFDLTSRETAITQQNNPNKQASSMEADAWAMKMHGAENMLLTGGRRKTLSILKCLRDAHMDFPGTPVTNYILKTLVLYECEKHCSEYEWEDPNIGDRLVGILLQLVSCLQCRRCAHYFLPSLDLLRSKPVHSIEHSAQLAWHLVRKLMIDPNALQSL</sequence>
<gene>
    <name type="primary">mab-21</name>
    <name type="ORF">F35G12.6</name>
</gene>
<reference key="1">
    <citation type="journal article" date="1995" name="Development">
        <title>The mab-21 gene of Caenorhabditis elegans encodes a novel protein required for choice of alternate cell fates.</title>
        <authorList>
            <person name="Chow K.L."/>
            <person name="Hall D.H."/>
            <person name="Emmons S.W."/>
        </authorList>
    </citation>
    <scope>NUCLEOTIDE SEQUENCE [MRNA]</scope>
    <scope>FUNCTION</scope>
    <scope>DISRUPTION PHENOTYPE</scope>
    <source>
        <strain>Bristol N2</strain>
    </source>
</reference>
<reference key="2">
    <citation type="submission" date="2000-06" db="EMBL/GenBank/DDBJ databases">
        <authorList>
            <person name="Chow K.L."/>
        </authorList>
    </citation>
    <scope>SEQUENCE REVISION TO 363-364</scope>
</reference>
<reference key="3">
    <citation type="journal article" date="1998" name="Science">
        <title>Genome sequence of the nematode C. elegans: a platform for investigating biology.</title>
        <authorList>
            <consortium name="The C. elegans sequencing consortium"/>
        </authorList>
    </citation>
    <scope>NUCLEOTIDE SEQUENCE [LARGE SCALE GENOMIC DNA]</scope>
    <source>
        <strain>Bristol N2</strain>
    </source>
</reference>
<reference key="4">
    <citation type="journal article" date="1999" name="Development">
        <title>Regulation of body length and male tail ray pattern formation of Caenorhabditis elegans by a member of TGF-beta family.</title>
        <authorList>
            <person name="Morita K."/>
            <person name="Chow K.L."/>
            <person name="Ueno N."/>
        </authorList>
    </citation>
    <scope>FUNCTION</scope>
</reference>
<reference key="5">
    <citation type="journal article" date="1999" name="Dev. Growth Differ.">
        <title>Stress-induced phenocopy of C. elegans defines functional steps of sensory organ differentiation.</title>
        <authorList>
            <person name="Chow K.L."/>
            <person name="Chan K.W."/>
        </authorList>
    </citation>
    <scope>FUNCTION</scope>
    <scope>INDUCTION</scope>
</reference>
<reference key="6">
    <citation type="journal article" date="2001" name="Dev. Dyn.">
        <title>Postembryonic expression of Caenorhabditis elegans mab-21 and its requirement in sensory ray differentiation.</title>
        <authorList>
            <person name="Ho S.H."/>
            <person name="So G.M.K."/>
            <person name="Chow K.L."/>
        </authorList>
    </citation>
    <scope>FUNCTION</scope>
    <scope>DEVELOPMENTAL STAGE</scope>
</reference>
<reference key="7">
    <citation type="journal article" date="2007" name="Biochem. Biophys. Res. Commun.">
        <title>C. elegans SIN-3 and its associated HDAC corepressor complex act as mediators of male sensory ray development.</title>
        <authorList>
            <person name="Choy S.W."/>
            <person name="Wong Y.-M."/>
            <person name="Ho S.H."/>
            <person name="Chow K.L."/>
        </authorList>
    </citation>
    <scope>FUNCTION</scope>
</reference>